<reference key="1">
    <citation type="journal article" date="2008" name="J. Bacteriol.">
        <title>The complete genome sequence of Actinobacillus pleuropneumoniae L20 (serotype 5b).</title>
        <authorList>
            <person name="Foote S.J."/>
            <person name="Bosse J.T."/>
            <person name="Bouevitch A.B."/>
            <person name="Langford P.R."/>
            <person name="Young N.M."/>
            <person name="Nash J.H.E."/>
        </authorList>
    </citation>
    <scope>NUCLEOTIDE SEQUENCE [LARGE SCALE GENOMIC DNA]</scope>
    <source>
        <strain>L20</strain>
    </source>
</reference>
<accession>A3N1F9</accession>
<keyword id="KW-0028">Amino-acid biosynthesis</keyword>
<keyword id="KW-0479">Metal-binding</keyword>
<keyword id="KW-0486">Methionine biosynthesis</keyword>
<keyword id="KW-0489">Methyltransferase</keyword>
<keyword id="KW-1185">Reference proteome</keyword>
<keyword id="KW-0677">Repeat</keyword>
<keyword id="KW-0808">Transferase</keyword>
<keyword id="KW-0862">Zinc</keyword>
<comment type="function">
    <text evidence="1">Catalyzes the transfer of a methyl group from 5-methyltetrahydrofolate to homocysteine resulting in methionine formation.</text>
</comment>
<comment type="catalytic activity">
    <reaction evidence="1">
        <text>5-methyltetrahydropteroyltri-L-glutamate + L-homocysteine = tetrahydropteroyltri-L-glutamate + L-methionine</text>
        <dbReference type="Rhea" id="RHEA:21196"/>
        <dbReference type="ChEBI" id="CHEBI:57844"/>
        <dbReference type="ChEBI" id="CHEBI:58140"/>
        <dbReference type="ChEBI" id="CHEBI:58199"/>
        <dbReference type="ChEBI" id="CHEBI:58207"/>
        <dbReference type="EC" id="2.1.1.14"/>
    </reaction>
</comment>
<comment type="cofactor">
    <cofactor evidence="1">
        <name>Zn(2+)</name>
        <dbReference type="ChEBI" id="CHEBI:29105"/>
    </cofactor>
    <text evidence="1">Binds 1 zinc ion per subunit.</text>
</comment>
<comment type="pathway">
    <text evidence="1">Amino-acid biosynthesis; L-methionine biosynthesis via de novo pathway; L-methionine from L-homocysteine (MetE route): step 1/1.</text>
</comment>
<comment type="similarity">
    <text evidence="1">Belongs to the vitamin-B12 independent methionine synthase family.</text>
</comment>
<gene>
    <name evidence="1" type="primary">metE</name>
    <name type="ordered locus">APL_1155</name>
</gene>
<feature type="chain" id="PRO_1000017215" description="5-methyltetrahydropteroyltriglutamate--homocysteine methyltransferase">
    <location>
        <begin position="1"/>
        <end position="757"/>
    </location>
</feature>
<feature type="active site" description="Proton donor" evidence="1">
    <location>
        <position position="695"/>
    </location>
</feature>
<feature type="binding site" evidence="1">
    <location>
        <begin position="16"/>
        <end position="19"/>
    </location>
    <ligand>
        <name>5-methyltetrahydropteroyltri-L-glutamate</name>
        <dbReference type="ChEBI" id="CHEBI:58207"/>
    </ligand>
</feature>
<feature type="binding site" evidence="1">
    <location>
        <position position="112"/>
    </location>
    <ligand>
        <name>5-methyltetrahydropteroyltri-L-glutamate</name>
        <dbReference type="ChEBI" id="CHEBI:58207"/>
    </ligand>
</feature>
<feature type="binding site" evidence="1">
    <location>
        <begin position="432"/>
        <end position="434"/>
    </location>
    <ligand>
        <name>L-homocysteine</name>
        <dbReference type="ChEBI" id="CHEBI:58199"/>
    </ligand>
</feature>
<feature type="binding site" evidence="1">
    <location>
        <begin position="432"/>
        <end position="434"/>
    </location>
    <ligand>
        <name>L-methionine</name>
        <dbReference type="ChEBI" id="CHEBI:57844"/>
    </ligand>
</feature>
<feature type="binding site" evidence="1">
    <location>
        <position position="485"/>
    </location>
    <ligand>
        <name>L-homocysteine</name>
        <dbReference type="ChEBI" id="CHEBI:58199"/>
    </ligand>
</feature>
<feature type="binding site" evidence="1">
    <location>
        <position position="485"/>
    </location>
    <ligand>
        <name>L-methionine</name>
        <dbReference type="ChEBI" id="CHEBI:57844"/>
    </ligand>
</feature>
<feature type="binding site" evidence="1">
    <location>
        <begin position="516"/>
        <end position="517"/>
    </location>
    <ligand>
        <name>5-methyltetrahydropteroyltri-L-glutamate</name>
        <dbReference type="ChEBI" id="CHEBI:58207"/>
    </ligand>
</feature>
<feature type="binding site" evidence="1">
    <location>
        <position position="562"/>
    </location>
    <ligand>
        <name>5-methyltetrahydropteroyltri-L-glutamate</name>
        <dbReference type="ChEBI" id="CHEBI:58207"/>
    </ligand>
</feature>
<feature type="binding site" evidence="1">
    <location>
        <position position="600"/>
    </location>
    <ligand>
        <name>L-homocysteine</name>
        <dbReference type="ChEBI" id="CHEBI:58199"/>
    </ligand>
</feature>
<feature type="binding site" evidence="1">
    <location>
        <position position="600"/>
    </location>
    <ligand>
        <name>L-methionine</name>
        <dbReference type="ChEBI" id="CHEBI:57844"/>
    </ligand>
</feature>
<feature type="binding site" evidence="1">
    <location>
        <position position="606"/>
    </location>
    <ligand>
        <name>5-methyltetrahydropteroyltri-L-glutamate</name>
        <dbReference type="ChEBI" id="CHEBI:58207"/>
    </ligand>
</feature>
<feature type="binding site" evidence="1">
    <location>
        <position position="642"/>
    </location>
    <ligand>
        <name>Zn(2+)</name>
        <dbReference type="ChEBI" id="CHEBI:29105"/>
        <note>catalytic</note>
    </ligand>
</feature>
<feature type="binding site" evidence="1">
    <location>
        <position position="644"/>
    </location>
    <ligand>
        <name>Zn(2+)</name>
        <dbReference type="ChEBI" id="CHEBI:29105"/>
        <note>catalytic</note>
    </ligand>
</feature>
<feature type="binding site" evidence="1">
    <location>
        <position position="666"/>
    </location>
    <ligand>
        <name>Zn(2+)</name>
        <dbReference type="ChEBI" id="CHEBI:29105"/>
        <note>catalytic</note>
    </ligand>
</feature>
<feature type="binding site" evidence="1">
    <location>
        <position position="727"/>
    </location>
    <ligand>
        <name>Zn(2+)</name>
        <dbReference type="ChEBI" id="CHEBI:29105"/>
        <note>catalytic</note>
    </ligand>
</feature>
<name>METE_ACTP2</name>
<sequence>MTTLHILGFPRVGAKRELKFAQERYWRKELAEQDLLDLAKALREKNWLHQAQADADFVTVGDFTFYDHILDLQVATGAIPARFGFDSQTLSLDQYFQLARGNKEQFAIEMTKWFDTNYHYLVPEFQKNTTFKANPTHYVNQIREAKAAGHQVKPVIVGPLTFLWLGKEKGEAFNRFDLLKQLVPIYFEILTALAAEGVEWIQIDEPALALDLPQEWLAAYQDVYAQLAKVNAKLLLATYFGSVAEHADLLKALPVDGLHLDLVRAPEQLSAFEDYPKVLSAGVIDGRNIWRANLNRVLDVLEPLKAKFNQRLWIAPSCSLLHTPYDLAVETQLQQNNPELYRWLAFTLQKVAELQVLKQALNAGRDAVTEQLNDSQTAADARANSNVIHKAEVAQRLANLPANADKRQSPFAERIKLQNKWLNLPLLPTTNIGSFPQTLEIRHARAAFKKGELSLADYEAAMKKEIEFVVRKQEELDLDVLVHGEGERNDMVEYFGELLDGFAFTKFGWVQSYGSRCVKPPVIYGDVTRPEPMTVRWSQYAQSLTDKVMKGMLTGPVTILQWSFVRNDIPRSTVCKQIGVALSDEVLDLEKAGIKVIQIDEPAIREGLPLKRADWDAYLQWAGEAFRLSYMGVKDDTQIHTHMCYSEFNDILPAIAGLDADVITIETSRSDMELLTAFADFKYPNDIGPGVYDIHSPRVPTAGEIEHLLRKALKVIPKERLWVNPDCGLKTRGWKETIEQLQVMVEVTKKLRAELAE</sequence>
<organism>
    <name type="scientific">Actinobacillus pleuropneumoniae serotype 5b (strain L20)</name>
    <dbReference type="NCBI Taxonomy" id="416269"/>
    <lineage>
        <taxon>Bacteria</taxon>
        <taxon>Pseudomonadati</taxon>
        <taxon>Pseudomonadota</taxon>
        <taxon>Gammaproteobacteria</taxon>
        <taxon>Pasteurellales</taxon>
        <taxon>Pasteurellaceae</taxon>
        <taxon>Actinobacillus</taxon>
    </lineage>
</organism>
<proteinExistence type="inferred from homology"/>
<protein>
    <recommendedName>
        <fullName evidence="1">5-methyltetrahydropteroyltriglutamate--homocysteine methyltransferase</fullName>
        <ecNumber evidence="1">2.1.1.14</ecNumber>
    </recommendedName>
    <alternativeName>
        <fullName evidence="1">Cobalamin-independent methionine synthase</fullName>
    </alternativeName>
    <alternativeName>
        <fullName evidence="1">Methionine synthase, vitamin-B12 independent isozyme</fullName>
    </alternativeName>
</protein>
<dbReference type="EC" id="2.1.1.14" evidence="1"/>
<dbReference type="EMBL" id="CP000569">
    <property type="protein sequence ID" value="ABN74245.1"/>
    <property type="molecule type" value="Genomic_DNA"/>
</dbReference>
<dbReference type="RefSeq" id="WP_009874773.1">
    <property type="nucleotide sequence ID" value="NC_009053.1"/>
</dbReference>
<dbReference type="SMR" id="A3N1F9"/>
<dbReference type="STRING" id="416269.APL_1155"/>
<dbReference type="EnsemblBacteria" id="ABN74245">
    <property type="protein sequence ID" value="ABN74245"/>
    <property type="gene ID" value="APL_1155"/>
</dbReference>
<dbReference type="KEGG" id="apl:APL_1155"/>
<dbReference type="PATRIC" id="fig|416269.6.peg.1204"/>
<dbReference type="eggNOG" id="COG0620">
    <property type="taxonomic scope" value="Bacteria"/>
</dbReference>
<dbReference type="HOGENOM" id="CLU_013175_0_0_6"/>
<dbReference type="UniPathway" id="UPA00051">
    <property type="reaction ID" value="UER00082"/>
</dbReference>
<dbReference type="Proteomes" id="UP000001432">
    <property type="component" value="Chromosome"/>
</dbReference>
<dbReference type="GO" id="GO:0003871">
    <property type="term" value="F:5-methyltetrahydropteroyltriglutamate-homocysteine S-methyltransferase activity"/>
    <property type="evidence" value="ECO:0007669"/>
    <property type="project" value="UniProtKB-UniRule"/>
</dbReference>
<dbReference type="GO" id="GO:0008270">
    <property type="term" value="F:zinc ion binding"/>
    <property type="evidence" value="ECO:0007669"/>
    <property type="project" value="InterPro"/>
</dbReference>
<dbReference type="GO" id="GO:0009086">
    <property type="term" value="P:methionine biosynthetic process"/>
    <property type="evidence" value="ECO:0007669"/>
    <property type="project" value="UniProtKB-UniRule"/>
</dbReference>
<dbReference type="GO" id="GO:0032259">
    <property type="term" value="P:methylation"/>
    <property type="evidence" value="ECO:0007669"/>
    <property type="project" value="UniProtKB-KW"/>
</dbReference>
<dbReference type="CDD" id="cd03311">
    <property type="entry name" value="CIMS_C_terminal_like"/>
    <property type="match status" value="1"/>
</dbReference>
<dbReference type="CDD" id="cd03312">
    <property type="entry name" value="CIMS_N_terminal_like"/>
    <property type="match status" value="1"/>
</dbReference>
<dbReference type="FunFam" id="3.20.20.210:FF:000002">
    <property type="entry name" value="5-methyltetrahydropteroyltriglutamate--homocysteine methyltransferase"/>
    <property type="match status" value="1"/>
</dbReference>
<dbReference type="Gene3D" id="3.20.20.210">
    <property type="match status" value="2"/>
</dbReference>
<dbReference type="HAMAP" id="MF_00172">
    <property type="entry name" value="Meth_synth"/>
    <property type="match status" value="1"/>
</dbReference>
<dbReference type="InterPro" id="IPR013215">
    <property type="entry name" value="Cbl-indep_Met_Synth_N"/>
</dbReference>
<dbReference type="InterPro" id="IPR006276">
    <property type="entry name" value="Cobalamin-indep_Met_synthase"/>
</dbReference>
<dbReference type="InterPro" id="IPR002629">
    <property type="entry name" value="Met_Synth_C/arc"/>
</dbReference>
<dbReference type="InterPro" id="IPR038071">
    <property type="entry name" value="UROD/MetE-like_sf"/>
</dbReference>
<dbReference type="NCBIfam" id="TIGR01371">
    <property type="entry name" value="met_syn_B12ind"/>
    <property type="match status" value="1"/>
</dbReference>
<dbReference type="NCBIfam" id="NF003556">
    <property type="entry name" value="PRK05222.1"/>
    <property type="match status" value="1"/>
</dbReference>
<dbReference type="PANTHER" id="PTHR30519">
    <property type="entry name" value="5-METHYLTETRAHYDROPTEROYLTRIGLUTAMATE--HOMOCYSTEINE METHYLTRANSFERASE"/>
    <property type="match status" value="1"/>
</dbReference>
<dbReference type="Pfam" id="PF08267">
    <property type="entry name" value="Meth_synt_1"/>
    <property type="match status" value="1"/>
</dbReference>
<dbReference type="Pfam" id="PF01717">
    <property type="entry name" value="Meth_synt_2"/>
    <property type="match status" value="1"/>
</dbReference>
<dbReference type="PIRSF" id="PIRSF000382">
    <property type="entry name" value="MeTrfase_B12_ind"/>
    <property type="match status" value="1"/>
</dbReference>
<dbReference type="SUPFAM" id="SSF51726">
    <property type="entry name" value="UROD/MetE-like"/>
    <property type="match status" value="2"/>
</dbReference>
<evidence type="ECO:0000255" key="1">
    <source>
        <dbReference type="HAMAP-Rule" id="MF_00172"/>
    </source>
</evidence>